<organism>
    <name type="scientific">Thermobifida fusca (strain YX)</name>
    <dbReference type="NCBI Taxonomy" id="269800"/>
    <lineage>
        <taxon>Bacteria</taxon>
        <taxon>Bacillati</taxon>
        <taxon>Actinomycetota</taxon>
        <taxon>Actinomycetes</taxon>
        <taxon>Streptosporangiales</taxon>
        <taxon>Nocardiopsidaceae</taxon>
        <taxon>Thermobifida</taxon>
    </lineage>
</organism>
<proteinExistence type="inferred from homology"/>
<name>EST1_THEFY</name>
<accession>Q47M62</accession>
<sequence length="497" mass="52941">MEIVIRTGSGDVRGSKENGIAVFRGIPYAEPPVGAHRFTAPRPPRPWDGVRDATEFSATAPRPPYPEAIGALLIERFIPGDDYLTLNVWTPDPNAVGLPVMVWIHGGAFTNGSGSEPVYDGAAFARDGVVFVSFNYRLGIIGFADLPDAPSNRGLLDQIAALEWVRDNIARFGGDPGNVTVFGESAGAMSVCTLMATPRARGLFRRAILQSGAGNMAVAAEDATTIAAVIAHRLGVEPTAAALAHVPVAQLLDVQQQVAQEIQGAPDPAVWGERIAGGSVLLPFAPVIDGELLSQRPAEAIAGGAGHDVDLLFGTTTDEYRLFLAPTGLLPFITGDYVTTHLAKSGLDADAAKAYTAEGRGEEPGDILASIITDQVFRIPALRIAESRVDAPARTFGYEFAWRTPQLDGILGACHAVELPFVFRTLDRAASLVGTNPPEELAETVHNAWVRFATSGDPGWPAWNPETRSVMRFDHPVSEMVTDPYPATRALWDGVPL</sequence>
<reference key="1">
    <citation type="journal article" date="2007" name="J. Bacteriol.">
        <title>Genome sequence and analysis of the soil cellulolytic actinomycete Thermobifida fusca YX.</title>
        <authorList>
            <person name="Lykidis A."/>
            <person name="Mavromatis K."/>
            <person name="Ivanova N."/>
            <person name="Anderson I."/>
            <person name="Land M."/>
            <person name="DiBartolo G."/>
            <person name="Martinez M."/>
            <person name="Lapidus A."/>
            <person name="Lucas S."/>
            <person name="Copeland A."/>
            <person name="Richardson P."/>
            <person name="Wilson D.B."/>
            <person name="Kyrpides N."/>
        </authorList>
    </citation>
    <scope>NUCLEOTIDE SEQUENCE [LARGE SCALE GENOMIC DNA]</scope>
    <source>
        <strain>YX</strain>
    </source>
</reference>
<comment type="catalytic activity">
    <reaction evidence="3 5">
        <text>a carboxylic ester + H2O = an alcohol + a carboxylate + H(+)</text>
        <dbReference type="Rhea" id="RHEA:21164"/>
        <dbReference type="ChEBI" id="CHEBI:15377"/>
        <dbReference type="ChEBI" id="CHEBI:15378"/>
        <dbReference type="ChEBI" id="CHEBI:29067"/>
        <dbReference type="ChEBI" id="CHEBI:30879"/>
        <dbReference type="ChEBI" id="CHEBI:33308"/>
        <dbReference type="EC" id="3.1.1.1"/>
    </reaction>
</comment>
<comment type="subcellular location">
    <subcellularLocation>
        <location evidence="3">Secreted</location>
    </subcellularLocation>
</comment>
<comment type="similarity">
    <text evidence="4">Belongs to the type-B carboxylesterase/lipase family.</text>
</comment>
<gene>
    <name type="ordered locus">Tfu_2427</name>
</gene>
<protein>
    <recommendedName>
        <fullName evidence="3 6">Carboxylesterase</fullName>
        <ecNumber>3.1.1.1</ecNumber>
    </recommendedName>
</protein>
<dbReference type="EC" id="3.1.1.1"/>
<dbReference type="EMBL" id="CP000088">
    <property type="protein sequence ID" value="AAZ56460.1"/>
    <property type="molecule type" value="Genomic_DNA"/>
</dbReference>
<dbReference type="RefSeq" id="WP_011292850.1">
    <property type="nucleotide sequence ID" value="NC_007333.1"/>
</dbReference>
<dbReference type="SMR" id="Q47M62"/>
<dbReference type="STRING" id="269800.Tfu_2427"/>
<dbReference type="ESTHER" id="thefu-1831">
    <property type="family name" value="Carb_B_Bacteria"/>
</dbReference>
<dbReference type="KEGG" id="tfu:Tfu_2427"/>
<dbReference type="eggNOG" id="COG2272">
    <property type="taxonomic scope" value="Bacteria"/>
</dbReference>
<dbReference type="HOGENOM" id="CLU_006586_16_0_11"/>
<dbReference type="OrthoDB" id="4308422at2"/>
<dbReference type="GO" id="GO:0005576">
    <property type="term" value="C:extracellular region"/>
    <property type="evidence" value="ECO:0007669"/>
    <property type="project" value="UniProtKB-SubCell"/>
</dbReference>
<dbReference type="GO" id="GO:0106435">
    <property type="term" value="F:carboxylesterase activity"/>
    <property type="evidence" value="ECO:0007669"/>
    <property type="project" value="UniProtKB-EC"/>
</dbReference>
<dbReference type="Gene3D" id="3.40.50.1820">
    <property type="entry name" value="alpha/beta hydrolase"/>
    <property type="match status" value="1"/>
</dbReference>
<dbReference type="InterPro" id="IPR029058">
    <property type="entry name" value="AB_hydrolase_fold"/>
</dbReference>
<dbReference type="InterPro" id="IPR002018">
    <property type="entry name" value="CarbesteraseB"/>
</dbReference>
<dbReference type="InterPro" id="IPR019826">
    <property type="entry name" value="Carboxylesterase_B_AS"/>
</dbReference>
<dbReference type="InterPro" id="IPR050309">
    <property type="entry name" value="Type-B_Carboxylest/Lipase"/>
</dbReference>
<dbReference type="PANTHER" id="PTHR11559">
    <property type="entry name" value="CARBOXYLESTERASE"/>
    <property type="match status" value="1"/>
</dbReference>
<dbReference type="Pfam" id="PF00135">
    <property type="entry name" value="COesterase"/>
    <property type="match status" value="1"/>
</dbReference>
<dbReference type="SUPFAM" id="SSF53474">
    <property type="entry name" value="alpha/beta-Hydrolases"/>
    <property type="match status" value="1"/>
</dbReference>
<dbReference type="PROSITE" id="PS00122">
    <property type="entry name" value="CARBOXYLESTERASE_B_1"/>
    <property type="match status" value="1"/>
</dbReference>
<feature type="chain" id="PRO_0000379929" description="Carboxylesterase">
    <location>
        <begin position="1"/>
        <end position="497"/>
    </location>
</feature>
<feature type="active site" description="Acyl-ester intermediate" evidence="1 5">
    <location>
        <position position="185"/>
    </location>
</feature>
<feature type="active site" description="Charge relay system" evidence="1">
    <location>
        <position position="319"/>
    </location>
</feature>
<feature type="active site" description="Charge relay system" evidence="2">
    <location>
        <position position="415"/>
    </location>
</feature>
<evidence type="ECO:0000250" key="1">
    <source>
        <dbReference type="UniProtKB" id="P21836"/>
    </source>
</evidence>
<evidence type="ECO:0000250" key="2">
    <source>
        <dbReference type="UniProtKB" id="P37967"/>
    </source>
</evidence>
<evidence type="ECO:0000250" key="3">
    <source>
        <dbReference type="UniProtKB" id="P86325"/>
    </source>
</evidence>
<evidence type="ECO:0000255" key="4"/>
<evidence type="ECO:0000255" key="5">
    <source>
        <dbReference type="PROSITE-ProRule" id="PRU10039"/>
    </source>
</evidence>
<evidence type="ECO:0000312" key="6">
    <source>
        <dbReference type="EMBL" id="AAZ56460.1"/>
    </source>
</evidence>
<keyword id="KW-0378">Hydrolase</keyword>
<keyword id="KW-0964">Secreted</keyword>
<keyword id="KW-0719">Serine esterase</keyword>